<comment type="function">
    <text evidence="1">Involved in mRNA degradation. Catalyzes the phosphorolysis of single-stranded polyribonucleotides processively in the 3'- to 5'-direction.</text>
</comment>
<comment type="catalytic activity">
    <reaction evidence="1">
        <text>RNA(n+1) + phosphate = RNA(n) + a ribonucleoside 5'-diphosphate</text>
        <dbReference type="Rhea" id="RHEA:22096"/>
        <dbReference type="Rhea" id="RHEA-COMP:14527"/>
        <dbReference type="Rhea" id="RHEA-COMP:17342"/>
        <dbReference type="ChEBI" id="CHEBI:43474"/>
        <dbReference type="ChEBI" id="CHEBI:57930"/>
        <dbReference type="ChEBI" id="CHEBI:140395"/>
        <dbReference type="EC" id="2.7.7.8"/>
    </reaction>
</comment>
<comment type="cofactor">
    <cofactor evidence="1">
        <name>Mg(2+)</name>
        <dbReference type="ChEBI" id="CHEBI:18420"/>
    </cofactor>
</comment>
<comment type="subunit">
    <text evidence="1">Component of the RNA degradosome, which is a multiprotein complex involved in RNA processing and mRNA degradation.</text>
</comment>
<comment type="subcellular location">
    <subcellularLocation>
        <location evidence="1">Cytoplasm</location>
    </subcellularLocation>
</comment>
<comment type="similarity">
    <text evidence="1">Belongs to the polyribonucleotide nucleotidyltransferase family.</text>
</comment>
<comment type="sequence caution" evidence="3">
    <conflict type="erroneous initiation">
        <sequence resource="EMBL-CDS" id="AAN44672"/>
    </conflict>
</comment>
<comment type="sequence caution" evidence="3">
    <conflict type="erroneous initiation">
        <sequence resource="EMBL-CDS" id="AAP18486"/>
    </conflict>
</comment>
<proteinExistence type="inferred from homology"/>
<reference key="1">
    <citation type="journal article" date="2002" name="Nucleic Acids Res.">
        <title>Genome sequence of Shigella flexneri 2a: insights into pathogenicity through comparison with genomes of Escherichia coli K12 and O157.</title>
        <authorList>
            <person name="Jin Q."/>
            <person name="Yuan Z."/>
            <person name="Xu J."/>
            <person name="Wang Y."/>
            <person name="Shen Y."/>
            <person name="Lu W."/>
            <person name="Wang J."/>
            <person name="Liu H."/>
            <person name="Yang J."/>
            <person name="Yang F."/>
            <person name="Zhang X."/>
            <person name="Zhang J."/>
            <person name="Yang G."/>
            <person name="Wu H."/>
            <person name="Qu D."/>
            <person name="Dong J."/>
            <person name="Sun L."/>
            <person name="Xue Y."/>
            <person name="Zhao A."/>
            <person name="Gao Y."/>
            <person name="Zhu J."/>
            <person name="Kan B."/>
            <person name="Ding K."/>
            <person name="Chen S."/>
            <person name="Cheng H."/>
            <person name="Yao Z."/>
            <person name="He B."/>
            <person name="Chen R."/>
            <person name="Ma D."/>
            <person name="Qiang B."/>
            <person name="Wen Y."/>
            <person name="Hou Y."/>
            <person name="Yu J."/>
        </authorList>
    </citation>
    <scope>NUCLEOTIDE SEQUENCE [LARGE SCALE GENOMIC DNA]</scope>
    <source>
        <strain>301 / Serotype 2a</strain>
    </source>
</reference>
<reference key="2">
    <citation type="journal article" date="2003" name="Infect. Immun.">
        <title>Complete genome sequence and comparative genomics of Shigella flexneri serotype 2a strain 2457T.</title>
        <authorList>
            <person name="Wei J."/>
            <person name="Goldberg M.B."/>
            <person name="Burland V."/>
            <person name="Venkatesan M.M."/>
            <person name="Deng W."/>
            <person name="Fournier G."/>
            <person name="Mayhew G.F."/>
            <person name="Plunkett G. III"/>
            <person name="Rose D.J."/>
            <person name="Darling A."/>
            <person name="Mau B."/>
            <person name="Perna N.T."/>
            <person name="Payne S.M."/>
            <person name="Runyen-Janecky L.J."/>
            <person name="Zhou S."/>
            <person name="Schwartz D.C."/>
            <person name="Blattner F.R."/>
        </authorList>
    </citation>
    <scope>NUCLEOTIDE SEQUENCE [LARGE SCALE GENOMIC DNA]</scope>
    <source>
        <strain>ATCC 700930 / 2457T / Serotype 2a</strain>
    </source>
</reference>
<protein>
    <recommendedName>
        <fullName evidence="1">Polyribonucleotide nucleotidyltransferase</fullName>
        <ecNumber evidence="1">2.7.7.8</ecNumber>
    </recommendedName>
    <alternativeName>
        <fullName evidence="1">Polynucleotide phosphorylase</fullName>
        <shortName evidence="1">PNPase</shortName>
    </alternativeName>
</protein>
<dbReference type="EC" id="2.7.7.8" evidence="1"/>
<dbReference type="EMBL" id="AE005674">
    <property type="protein sequence ID" value="AAN44672.2"/>
    <property type="status" value="ALT_INIT"/>
    <property type="molecule type" value="Genomic_DNA"/>
</dbReference>
<dbReference type="EMBL" id="AE014073">
    <property type="protein sequence ID" value="AAP18486.1"/>
    <property type="status" value="ALT_INIT"/>
    <property type="molecule type" value="Genomic_DNA"/>
</dbReference>
<dbReference type="RefSeq" id="NP_708965.2">
    <property type="nucleotide sequence ID" value="NC_004337.2"/>
</dbReference>
<dbReference type="RefSeq" id="WP_001297425.1">
    <property type="nucleotide sequence ID" value="NZ_WPGW01000004.1"/>
</dbReference>
<dbReference type="SMR" id="Q83JG0"/>
<dbReference type="STRING" id="198214.SF3205"/>
<dbReference type="PaxDb" id="198214-SF3205"/>
<dbReference type="GeneID" id="1025664"/>
<dbReference type="KEGG" id="sfl:SF3205"/>
<dbReference type="KEGG" id="sfx:S3422"/>
<dbReference type="PATRIC" id="fig|198214.7.peg.3805"/>
<dbReference type="HOGENOM" id="CLU_004217_2_2_6"/>
<dbReference type="Proteomes" id="UP000001006">
    <property type="component" value="Chromosome"/>
</dbReference>
<dbReference type="Proteomes" id="UP000002673">
    <property type="component" value="Chromosome"/>
</dbReference>
<dbReference type="GO" id="GO:0005829">
    <property type="term" value="C:cytosol"/>
    <property type="evidence" value="ECO:0007669"/>
    <property type="project" value="TreeGrafter"/>
</dbReference>
<dbReference type="GO" id="GO:0000175">
    <property type="term" value="F:3'-5'-RNA exonuclease activity"/>
    <property type="evidence" value="ECO:0007669"/>
    <property type="project" value="TreeGrafter"/>
</dbReference>
<dbReference type="GO" id="GO:0000287">
    <property type="term" value="F:magnesium ion binding"/>
    <property type="evidence" value="ECO:0007669"/>
    <property type="project" value="UniProtKB-UniRule"/>
</dbReference>
<dbReference type="GO" id="GO:0004654">
    <property type="term" value="F:polyribonucleotide nucleotidyltransferase activity"/>
    <property type="evidence" value="ECO:0007669"/>
    <property type="project" value="UniProtKB-UniRule"/>
</dbReference>
<dbReference type="GO" id="GO:0003723">
    <property type="term" value="F:RNA binding"/>
    <property type="evidence" value="ECO:0007669"/>
    <property type="project" value="UniProtKB-UniRule"/>
</dbReference>
<dbReference type="GO" id="GO:0006402">
    <property type="term" value="P:mRNA catabolic process"/>
    <property type="evidence" value="ECO:0007669"/>
    <property type="project" value="UniProtKB-UniRule"/>
</dbReference>
<dbReference type="GO" id="GO:0006396">
    <property type="term" value="P:RNA processing"/>
    <property type="evidence" value="ECO:0007669"/>
    <property type="project" value="InterPro"/>
</dbReference>
<dbReference type="CDD" id="cd02393">
    <property type="entry name" value="KH-I_PNPase"/>
    <property type="match status" value="1"/>
</dbReference>
<dbReference type="CDD" id="cd11363">
    <property type="entry name" value="RNase_PH_PNPase_1"/>
    <property type="match status" value="1"/>
</dbReference>
<dbReference type="CDD" id="cd11364">
    <property type="entry name" value="RNase_PH_PNPase_2"/>
    <property type="match status" value="1"/>
</dbReference>
<dbReference type="CDD" id="cd04472">
    <property type="entry name" value="S1_PNPase"/>
    <property type="match status" value="1"/>
</dbReference>
<dbReference type="FunFam" id="2.40.50.140:FF:000023">
    <property type="entry name" value="Polyribonucleotide nucleotidyltransferase"/>
    <property type="match status" value="1"/>
</dbReference>
<dbReference type="FunFam" id="3.30.1370.10:FF:000001">
    <property type="entry name" value="Polyribonucleotide nucleotidyltransferase"/>
    <property type="match status" value="1"/>
</dbReference>
<dbReference type="FunFam" id="3.30.230.70:FF:000001">
    <property type="entry name" value="Polyribonucleotide nucleotidyltransferase"/>
    <property type="match status" value="1"/>
</dbReference>
<dbReference type="FunFam" id="3.30.230.70:FF:000002">
    <property type="entry name" value="Polyribonucleotide nucleotidyltransferase"/>
    <property type="match status" value="1"/>
</dbReference>
<dbReference type="Gene3D" id="3.30.230.70">
    <property type="entry name" value="GHMP Kinase, N-terminal domain"/>
    <property type="match status" value="2"/>
</dbReference>
<dbReference type="Gene3D" id="3.30.1370.10">
    <property type="entry name" value="K Homology domain, type 1"/>
    <property type="match status" value="1"/>
</dbReference>
<dbReference type="Gene3D" id="2.40.50.140">
    <property type="entry name" value="Nucleic acid-binding proteins"/>
    <property type="match status" value="1"/>
</dbReference>
<dbReference type="HAMAP" id="MF_01595">
    <property type="entry name" value="PNPase"/>
    <property type="match status" value="1"/>
</dbReference>
<dbReference type="InterPro" id="IPR001247">
    <property type="entry name" value="ExoRNase_PH_dom1"/>
</dbReference>
<dbReference type="InterPro" id="IPR015847">
    <property type="entry name" value="ExoRNase_PH_dom2"/>
</dbReference>
<dbReference type="InterPro" id="IPR036345">
    <property type="entry name" value="ExoRNase_PH_dom2_sf"/>
</dbReference>
<dbReference type="InterPro" id="IPR004087">
    <property type="entry name" value="KH_dom"/>
</dbReference>
<dbReference type="InterPro" id="IPR004088">
    <property type="entry name" value="KH_dom_type_1"/>
</dbReference>
<dbReference type="InterPro" id="IPR036612">
    <property type="entry name" value="KH_dom_type_1_sf"/>
</dbReference>
<dbReference type="InterPro" id="IPR012340">
    <property type="entry name" value="NA-bd_OB-fold"/>
</dbReference>
<dbReference type="InterPro" id="IPR012162">
    <property type="entry name" value="PNPase"/>
</dbReference>
<dbReference type="InterPro" id="IPR027408">
    <property type="entry name" value="PNPase/RNase_PH_dom_sf"/>
</dbReference>
<dbReference type="InterPro" id="IPR015848">
    <property type="entry name" value="PNPase_PH_RNA-bd_bac/org-type"/>
</dbReference>
<dbReference type="InterPro" id="IPR036456">
    <property type="entry name" value="PNPase_PH_RNA-bd_sf"/>
</dbReference>
<dbReference type="InterPro" id="IPR020568">
    <property type="entry name" value="Ribosomal_Su5_D2-typ_SF"/>
</dbReference>
<dbReference type="InterPro" id="IPR003029">
    <property type="entry name" value="S1_domain"/>
</dbReference>
<dbReference type="NCBIfam" id="TIGR03591">
    <property type="entry name" value="polynuc_phos"/>
    <property type="match status" value="1"/>
</dbReference>
<dbReference type="NCBIfam" id="NF008805">
    <property type="entry name" value="PRK11824.1"/>
    <property type="match status" value="1"/>
</dbReference>
<dbReference type="PANTHER" id="PTHR11252">
    <property type="entry name" value="POLYRIBONUCLEOTIDE NUCLEOTIDYLTRANSFERASE"/>
    <property type="match status" value="1"/>
</dbReference>
<dbReference type="PANTHER" id="PTHR11252:SF0">
    <property type="entry name" value="POLYRIBONUCLEOTIDE NUCLEOTIDYLTRANSFERASE 1, MITOCHONDRIAL"/>
    <property type="match status" value="1"/>
</dbReference>
<dbReference type="Pfam" id="PF00013">
    <property type="entry name" value="KH_1"/>
    <property type="match status" value="1"/>
</dbReference>
<dbReference type="Pfam" id="PF03726">
    <property type="entry name" value="PNPase"/>
    <property type="match status" value="1"/>
</dbReference>
<dbReference type="Pfam" id="PF01138">
    <property type="entry name" value="RNase_PH"/>
    <property type="match status" value="2"/>
</dbReference>
<dbReference type="Pfam" id="PF03725">
    <property type="entry name" value="RNase_PH_C"/>
    <property type="match status" value="2"/>
</dbReference>
<dbReference type="Pfam" id="PF00575">
    <property type="entry name" value="S1"/>
    <property type="match status" value="1"/>
</dbReference>
<dbReference type="PIRSF" id="PIRSF005499">
    <property type="entry name" value="PNPase"/>
    <property type="match status" value="1"/>
</dbReference>
<dbReference type="SMART" id="SM00322">
    <property type="entry name" value="KH"/>
    <property type="match status" value="1"/>
</dbReference>
<dbReference type="SMART" id="SM00316">
    <property type="entry name" value="S1"/>
    <property type="match status" value="1"/>
</dbReference>
<dbReference type="SUPFAM" id="SSF54791">
    <property type="entry name" value="Eukaryotic type KH-domain (KH-domain type I)"/>
    <property type="match status" value="1"/>
</dbReference>
<dbReference type="SUPFAM" id="SSF50249">
    <property type="entry name" value="Nucleic acid-binding proteins"/>
    <property type="match status" value="1"/>
</dbReference>
<dbReference type="SUPFAM" id="SSF46915">
    <property type="entry name" value="Polynucleotide phosphorylase/guanosine pentaphosphate synthase (PNPase/GPSI), domain 3"/>
    <property type="match status" value="1"/>
</dbReference>
<dbReference type="SUPFAM" id="SSF55666">
    <property type="entry name" value="Ribonuclease PH domain 2-like"/>
    <property type="match status" value="2"/>
</dbReference>
<dbReference type="SUPFAM" id="SSF54211">
    <property type="entry name" value="Ribosomal protein S5 domain 2-like"/>
    <property type="match status" value="2"/>
</dbReference>
<dbReference type="PROSITE" id="PS50084">
    <property type="entry name" value="KH_TYPE_1"/>
    <property type="match status" value="1"/>
</dbReference>
<dbReference type="PROSITE" id="PS50126">
    <property type="entry name" value="S1"/>
    <property type="match status" value="1"/>
</dbReference>
<evidence type="ECO:0000255" key="1">
    <source>
        <dbReference type="HAMAP-Rule" id="MF_01595"/>
    </source>
</evidence>
<evidence type="ECO:0000256" key="2">
    <source>
        <dbReference type="SAM" id="MobiDB-lite"/>
    </source>
</evidence>
<evidence type="ECO:0000305" key="3"/>
<sequence>MLNPIVRKFQYGQHTVTLETGMMARQATAAVMVSMDDTAVFVTVVGQKKAKPGQDFFPLTVNYQERTYAAGRIPGSFFRREGRPSEGETLIARLIDRPIRPLFPEGFVNEVQVIATVVSVNPQVNPDIVAMIGASAALSLSGIPFNGPIGAARVGYINDQYVLNPTQDELKESKLDLVVAGTEAAVLMVESEAELLSEDQMLGAVVFGHEQQQVVIQNINELVKEAGKPRWDWQPEPVNEALNARVAALAEARLSDAYRITDKQERYAQVDVIKSETIATLLAEDETLDENELGEILHAIEKNVVRSRVLAGEPRIDGREKDMIRGLDVRTGVLPRTHGSALFTRGETQALVTATLGTARDAQVLDELMGERTDTFLFHYNFPPYSVGETGMVGSPKRREIGHGRLAKRGVLAVMPDMDKFPYTVRVVSEITESNGSSSMASVCGASLALMDAGVPIKAAVAGIAMGLVKEGDNYVVLSDILGDEDHLGDMDFKVAGSREGISALQMDIKIEGITKEIMQVALNQAKGARLHILGVMEQAINAPRGDISEFAPRIHTIKINPDKIKDVIGKGGSVIRALTEETGTTIEIEDDGTVKIAATDGEKAKHAIRRIEEITAEIEVGRVYTGKVTRIVDFGAFVAIGGGKEGLVHISQIADKRVEKVTDYLQMGQEVPVKVLEVDRQGRIRLSIKEATEQSQPAAAPEAPAAEQGE</sequence>
<keyword id="KW-0963">Cytoplasm</keyword>
<keyword id="KW-0460">Magnesium</keyword>
<keyword id="KW-0479">Metal-binding</keyword>
<keyword id="KW-0548">Nucleotidyltransferase</keyword>
<keyword id="KW-1185">Reference proteome</keyword>
<keyword id="KW-0694">RNA-binding</keyword>
<keyword id="KW-0808">Transferase</keyword>
<name>PNP_SHIFL</name>
<feature type="chain" id="PRO_0000329850" description="Polyribonucleotide nucleotidyltransferase">
    <location>
        <begin position="1"/>
        <end position="711"/>
    </location>
</feature>
<feature type="domain" description="KH" evidence="1">
    <location>
        <begin position="553"/>
        <end position="612"/>
    </location>
</feature>
<feature type="domain" description="S1 motif" evidence="1">
    <location>
        <begin position="622"/>
        <end position="690"/>
    </location>
</feature>
<feature type="region of interest" description="Disordered" evidence="2">
    <location>
        <begin position="689"/>
        <end position="711"/>
    </location>
</feature>
<feature type="compositionally biased region" description="Low complexity" evidence="2">
    <location>
        <begin position="694"/>
        <end position="711"/>
    </location>
</feature>
<feature type="binding site" evidence="1">
    <location>
        <position position="486"/>
    </location>
    <ligand>
        <name>Mg(2+)</name>
        <dbReference type="ChEBI" id="CHEBI:18420"/>
    </ligand>
</feature>
<feature type="binding site" evidence="1">
    <location>
        <position position="492"/>
    </location>
    <ligand>
        <name>Mg(2+)</name>
        <dbReference type="ChEBI" id="CHEBI:18420"/>
    </ligand>
</feature>
<accession>Q83JG0</accession>
<accession>Q7UBF6</accession>
<gene>
    <name evidence="1" type="primary">pnp</name>
    <name type="ordered locus">SF3205</name>
    <name type="ordered locus">S3422</name>
</gene>
<organism>
    <name type="scientific">Shigella flexneri</name>
    <dbReference type="NCBI Taxonomy" id="623"/>
    <lineage>
        <taxon>Bacteria</taxon>
        <taxon>Pseudomonadati</taxon>
        <taxon>Pseudomonadota</taxon>
        <taxon>Gammaproteobacteria</taxon>
        <taxon>Enterobacterales</taxon>
        <taxon>Enterobacteriaceae</taxon>
        <taxon>Shigella</taxon>
    </lineage>
</organism>